<comment type="function">
    <text evidence="1">Forms part of the ribosomal stalk which helps the ribosome interact with GTP-bound translation factors. Is thus essential for accurate translation.</text>
</comment>
<comment type="subunit">
    <text evidence="1">Homodimer. Part of the ribosomal stalk of the 50S ribosomal subunit. Forms a multimeric L10(L12)X complex, where L10 forms an elongated spine to which 2 to 4 L12 dimers bind in a sequential fashion. Binds GTP-bound translation factors.</text>
</comment>
<comment type="similarity">
    <text evidence="1">Belongs to the bacterial ribosomal protein bL12 family.</text>
</comment>
<keyword id="KW-1185">Reference proteome</keyword>
<keyword id="KW-0687">Ribonucleoprotein</keyword>
<keyword id="KW-0689">Ribosomal protein</keyword>
<evidence type="ECO:0000255" key="1">
    <source>
        <dbReference type="HAMAP-Rule" id="MF_00368"/>
    </source>
</evidence>
<evidence type="ECO:0000305" key="2"/>
<feature type="chain" id="PRO_0000243481" description="Large ribosomal subunit protein bL12">
    <location>
        <begin position="1"/>
        <end position="123"/>
    </location>
</feature>
<accession>Q21SF6</accession>
<gene>
    <name evidence="1" type="primary">rplL</name>
    <name type="ordered locus">Rfer_3593</name>
</gene>
<protein>
    <recommendedName>
        <fullName evidence="1">Large ribosomal subunit protein bL12</fullName>
    </recommendedName>
    <alternativeName>
        <fullName evidence="2">50S ribosomal protein L7/L12</fullName>
    </alternativeName>
</protein>
<sequence>MAFDKDAFLTALDSMTVMELNDLVKAIEEKFGVSAAAMSAPAAGGAVAAVAEEKTEFNVVLLEAGAAKVSVIKAVREITGLGLKEAKDMVDGAPKNVKEGVSKVDAEAALKKLLDAGAKAELK</sequence>
<organism>
    <name type="scientific">Albidiferax ferrireducens (strain ATCC BAA-621 / DSM 15236 / T118)</name>
    <name type="common">Rhodoferax ferrireducens</name>
    <dbReference type="NCBI Taxonomy" id="338969"/>
    <lineage>
        <taxon>Bacteria</taxon>
        <taxon>Pseudomonadati</taxon>
        <taxon>Pseudomonadota</taxon>
        <taxon>Betaproteobacteria</taxon>
        <taxon>Burkholderiales</taxon>
        <taxon>Comamonadaceae</taxon>
        <taxon>Rhodoferax</taxon>
    </lineage>
</organism>
<reference key="1">
    <citation type="submission" date="2006-02" db="EMBL/GenBank/DDBJ databases">
        <title>Complete sequence of chromosome of Rhodoferax ferrireducens DSM 15236.</title>
        <authorList>
            <person name="Copeland A."/>
            <person name="Lucas S."/>
            <person name="Lapidus A."/>
            <person name="Barry K."/>
            <person name="Detter J.C."/>
            <person name="Glavina del Rio T."/>
            <person name="Hammon N."/>
            <person name="Israni S."/>
            <person name="Pitluck S."/>
            <person name="Brettin T."/>
            <person name="Bruce D."/>
            <person name="Han C."/>
            <person name="Tapia R."/>
            <person name="Gilna P."/>
            <person name="Kiss H."/>
            <person name="Schmutz J."/>
            <person name="Larimer F."/>
            <person name="Land M."/>
            <person name="Kyrpides N."/>
            <person name="Ivanova N."/>
            <person name="Richardson P."/>
        </authorList>
    </citation>
    <scope>NUCLEOTIDE SEQUENCE [LARGE SCALE GENOMIC DNA]</scope>
    <source>
        <strain>ATCC BAA-621 / DSM 15236 / T118</strain>
    </source>
</reference>
<dbReference type="EMBL" id="CP000267">
    <property type="protein sequence ID" value="ABD71297.1"/>
    <property type="molecule type" value="Genomic_DNA"/>
</dbReference>
<dbReference type="RefSeq" id="WP_011465860.1">
    <property type="nucleotide sequence ID" value="NC_007908.1"/>
</dbReference>
<dbReference type="SMR" id="Q21SF6"/>
<dbReference type="STRING" id="338969.Rfer_3593"/>
<dbReference type="KEGG" id="rfr:Rfer_3593"/>
<dbReference type="eggNOG" id="COG0222">
    <property type="taxonomic scope" value="Bacteria"/>
</dbReference>
<dbReference type="HOGENOM" id="CLU_086499_3_2_4"/>
<dbReference type="OrthoDB" id="9811748at2"/>
<dbReference type="Proteomes" id="UP000008332">
    <property type="component" value="Chromosome"/>
</dbReference>
<dbReference type="GO" id="GO:0022625">
    <property type="term" value="C:cytosolic large ribosomal subunit"/>
    <property type="evidence" value="ECO:0007669"/>
    <property type="project" value="TreeGrafter"/>
</dbReference>
<dbReference type="GO" id="GO:0003729">
    <property type="term" value="F:mRNA binding"/>
    <property type="evidence" value="ECO:0007669"/>
    <property type="project" value="TreeGrafter"/>
</dbReference>
<dbReference type="GO" id="GO:0003735">
    <property type="term" value="F:structural constituent of ribosome"/>
    <property type="evidence" value="ECO:0007669"/>
    <property type="project" value="InterPro"/>
</dbReference>
<dbReference type="GO" id="GO:0006412">
    <property type="term" value="P:translation"/>
    <property type="evidence" value="ECO:0007669"/>
    <property type="project" value="UniProtKB-UniRule"/>
</dbReference>
<dbReference type="CDD" id="cd00387">
    <property type="entry name" value="Ribosomal_L7_L12"/>
    <property type="match status" value="1"/>
</dbReference>
<dbReference type="FunFam" id="3.30.1390.10:FF:000001">
    <property type="entry name" value="50S ribosomal protein L7/L12"/>
    <property type="match status" value="1"/>
</dbReference>
<dbReference type="Gene3D" id="3.30.1390.10">
    <property type="match status" value="1"/>
</dbReference>
<dbReference type="Gene3D" id="1.20.5.710">
    <property type="entry name" value="Single helix bin"/>
    <property type="match status" value="1"/>
</dbReference>
<dbReference type="HAMAP" id="MF_00368">
    <property type="entry name" value="Ribosomal_bL12"/>
    <property type="match status" value="1"/>
</dbReference>
<dbReference type="InterPro" id="IPR000206">
    <property type="entry name" value="Ribosomal_bL12"/>
</dbReference>
<dbReference type="InterPro" id="IPR013823">
    <property type="entry name" value="Ribosomal_bL12_C"/>
</dbReference>
<dbReference type="InterPro" id="IPR014719">
    <property type="entry name" value="Ribosomal_bL12_C/ClpS-like"/>
</dbReference>
<dbReference type="InterPro" id="IPR008932">
    <property type="entry name" value="Ribosomal_bL12_oligo"/>
</dbReference>
<dbReference type="InterPro" id="IPR036235">
    <property type="entry name" value="Ribosomal_bL12_oligo_N_sf"/>
</dbReference>
<dbReference type="NCBIfam" id="TIGR00855">
    <property type="entry name" value="L12"/>
    <property type="match status" value="1"/>
</dbReference>
<dbReference type="PANTHER" id="PTHR45987">
    <property type="entry name" value="39S RIBOSOMAL PROTEIN L12"/>
    <property type="match status" value="1"/>
</dbReference>
<dbReference type="PANTHER" id="PTHR45987:SF4">
    <property type="entry name" value="LARGE RIBOSOMAL SUBUNIT PROTEIN BL12M"/>
    <property type="match status" value="1"/>
</dbReference>
<dbReference type="Pfam" id="PF00542">
    <property type="entry name" value="Ribosomal_L12"/>
    <property type="match status" value="1"/>
</dbReference>
<dbReference type="Pfam" id="PF16320">
    <property type="entry name" value="Ribosomal_L12_N"/>
    <property type="match status" value="1"/>
</dbReference>
<dbReference type="SUPFAM" id="SSF54736">
    <property type="entry name" value="ClpS-like"/>
    <property type="match status" value="1"/>
</dbReference>
<dbReference type="SUPFAM" id="SSF48300">
    <property type="entry name" value="Ribosomal protein L7/12, oligomerisation (N-terminal) domain"/>
    <property type="match status" value="1"/>
</dbReference>
<proteinExistence type="inferred from homology"/>
<name>RL7_ALBFT</name>